<gene>
    <name evidence="1" type="primary">ydiU</name>
    <name evidence="1" type="synonym">selO</name>
    <name type="ordered locus">Pput_4941</name>
</gene>
<reference key="1">
    <citation type="submission" date="2007-05" db="EMBL/GenBank/DDBJ databases">
        <title>Complete sequence of Pseudomonas putida F1.</title>
        <authorList>
            <consortium name="US DOE Joint Genome Institute"/>
            <person name="Copeland A."/>
            <person name="Lucas S."/>
            <person name="Lapidus A."/>
            <person name="Barry K."/>
            <person name="Detter J.C."/>
            <person name="Glavina del Rio T."/>
            <person name="Hammon N."/>
            <person name="Israni S."/>
            <person name="Dalin E."/>
            <person name="Tice H."/>
            <person name="Pitluck S."/>
            <person name="Chain P."/>
            <person name="Malfatti S."/>
            <person name="Shin M."/>
            <person name="Vergez L."/>
            <person name="Schmutz J."/>
            <person name="Larimer F."/>
            <person name="Land M."/>
            <person name="Hauser L."/>
            <person name="Kyrpides N."/>
            <person name="Lykidis A."/>
            <person name="Parales R."/>
            <person name="Richardson P."/>
        </authorList>
    </citation>
    <scope>NUCLEOTIDE SEQUENCE [LARGE SCALE GENOMIC DNA]</scope>
    <source>
        <strain>ATCC 700007 / DSM 6899 / JCM 31910 / BCRC 17059 / LMG 24140 / F1</strain>
    </source>
</reference>
<comment type="function">
    <text evidence="1">Nucleotidyltransferase involved in the post-translational modification of proteins. It can catalyze the addition of adenosine monophosphate (AMP) or uridine monophosphate (UMP) to a protein, resulting in modifications known as AMPylation and UMPylation.</text>
</comment>
<comment type="catalytic activity">
    <reaction evidence="1">
        <text>L-seryl-[protein] + ATP = 3-O-(5'-adenylyl)-L-seryl-[protein] + diphosphate</text>
        <dbReference type="Rhea" id="RHEA:58120"/>
        <dbReference type="Rhea" id="RHEA-COMP:9863"/>
        <dbReference type="Rhea" id="RHEA-COMP:15073"/>
        <dbReference type="ChEBI" id="CHEBI:29999"/>
        <dbReference type="ChEBI" id="CHEBI:30616"/>
        <dbReference type="ChEBI" id="CHEBI:33019"/>
        <dbReference type="ChEBI" id="CHEBI:142516"/>
        <dbReference type="EC" id="2.7.7.108"/>
    </reaction>
</comment>
<comment type="catalytic activity">
    <reaction evidence="1">
        <text>L-threonyl-[protein] + ATP = 3-O-(5'-adenylyl)-L-threonyl-[protein] + diphosphate</text>
        <dbReference type="Rhea" id="RHEA:54292"/>
        <dbReference type="Rhea" id="RHEA-COMP:11060"/>
        <dbReference type="Rhea" id="RHEA-COMP:13847"/>
        <dbReference type="ChEBI" id="CHEBI:30013"/>
        <dbReference type="ChEBI" id="CHEBI:30616"/>
        <dbReference type="ChEBI" id="CHEBI:33019"/>
        <dbReference type="ChEBI" id="CHEBI:138113"/>
        <dbReference type="EC" id="2.7.7.108"/>
    </reaction>
</comment>
<comment type="catalytic activity">
    <reaction evidence="1">
        <text>L-tyrosyl-[protein] + ATP = O-(5'-adenylyl)-L-tyrosyl-[protein] + diphosphate</text>
        <dbReference type="Rhea" id="RHEA:54288"/>
        <dbReference type="Rhea" id="RHEA-COMP:10136"/>
        <dbReference type="Rhea" id="RHEA-COMP:13846"/>
        <dbReference type="ChEBI" id="CHEBI:30616"/>
        <dbReference type="ChEBI" id="CHEBI:33019"/>
        <dbReference type="ChEBI" id="CHEBI:46858"/>
        <dbReference type="ChEBI" id="CHEBI:83624"/>
        <dbReference type="EC" id="2.7.7.108"/>
    </reaction>
</comment>
<comment type="catalytic activity">
    <reaction evidence="1">
        <text>L-histidyl-[protein] + UTP = N(tele)-(5'-uridylyl)-L-histidyl-[protein] + diphosphate</text>
        <dbReference type="Rhea" id="RHEA:83891"/>
        <dbReference type="Rhea" id="RHEA-COMP:9745"/>
        <dbReference type="Rhea" id="RHEA-COMP:20239"/>
        <dbReference type="ChEBI" id="CHEBI:29979"/>
        <dbReference type="ChEBI" id="CHEBI:33019"/>
        <dbReference type="ChEBI" id="CHEBI:46398"/>
        <dbReference type="ChEBI" id="CHEBI:233474"/>
    </reaction>
</comment>
<comment type="catalytic activity">
    <reaction evidence="1">
        <text>L-seryl-[protein] + UTP = O-(5'-uridylyl)-L-seryl-[protein] + diphosphate</text>
        <dbReference type="Rhea" id="RHEA:64604"/>
        <dbReference type="Rhea" id="RHEA-COMP:9863"/>
        <dbReference type="Rhea" id="RHEA-COMP:16635"/>
        <dbReference type="ChEBI" id="CHEBI:29999"/>
        <dbReference type="ChEBI" id="CHEBI:33019"/>
        <dbReference type="ChEBI" id="CHEBI:46398"/>
        <dbReference type="ChEBI" id="CHEBI:156051"/>
    </reaction>
</comment>
<comment type="catalytic activity">
    <reaction evidence="1">
        <text>L-tyrosyl-[protein] + UTP = O-(5'-uridylyl)-L-tyrosyl-[protein] + diphosphate</text>
        <dbReference type="Rhea" id="RHEA:83887"/>
        <dbReference type="Rhea" id="RHEA-COMP:10136"/>
        <dbReference type="Rhea" id="RHEA-COMP:20238"/>
        <dbReference type="ChEBI" id="CHEBI:33019"/>
        <dbReference type="ChEBI" id="CHEBI:46398"/>
        <dbReference type="ChEBI" id="CHEBI:46858"/>
        <dbReference type="ChEBI" id="CHEBI:90602"/>
    </reaction>
</comment>
<comment type="cofactor">
    <cofactor evidence="1">
        <name>Mg(2+)</name>
        <dbReference type="ChEBI" id="CHEBI:18420"/>
    </cofactor>
    <cofactor evidence="1">
        <name>Mn(2+)</name>
        <dbReference type="ChEBI" id="CHEBI:29035"/>
    </cofactor>
</comment>
<comment type="similarity">
    <text evidence="1">Belongs to the SELO family.</text>
</comment>
<accession>A5WAA1</accession>
<name>SELO_PSEP1</name>
<keyword id="KW-0067">ATP-binding</keyword>
<keyword id="KW-0460">Magnesium</keyword>
<keyword id="KW-0464">Manganese</keyword>
<keyword id="KW-0479">Metal-binding</keyword>
<keyword id="KW-0547">Nucleotide-binding</keyword>
<keyword id="KW-0548">Nucleotidyltransferase</keyword>
<keyword id="KW-0808">Transferase</keyword>
<sequence length="486" mass="55041">MKALDQLTFDNRFARLGDAFSTQVLPEPIADPRLVVASESAMALLDLDPAQAELPVFAELFSGHKLWEEADPRAMVYSGHQFGSYNPRLGDGRGLLLAEVLNDVGEHWDLHLKGAGQTPYSRMGDGRAVLRSSIREFLASEALHALGIATSRALCVIGSSTPVWRETRESAAMLTRLAQSHVRFGHFEYFYYTKQPEQQRVLIDHVLEQHYPECRDAEQPYLAMFRTIVERNAELIARWQAYGFCHGVMNTDNMSILGITFDFGPYAFLDDFDANFICNHSDDRGRYSYANQVPIAHWNLSALAQALTTVIEVEPLKEALGLFLPLYQAHYLDLMRRRLGLTTAEDDDMALVERLLQCMQRGGVDYSLFFRKLGEQPVAEALKVARDDFIDLAGFDAWGADYLARCRREPGNAEGRRERMHAVNPLYVLRNYLAQKAIEAAEAGDYSEVRRLHQVLTRPFEEQPGMQAYAERPPEWGKHLEISCSS</sequence>
<feature type="chain" id="PRO_1000062033" description="Protein nucleotidyltransferase YdiU">
    <location>
        <begin position="1"/>
        <end position="486"/>
    </location>
</feature>
<feature type="active site" description="Proton acceptor" evidence="1">
    <location>
        <position position="252"/>
    </location>
</feature>
<feature type="binding site" evidence="1">
    <location>
        <position position="90"/>
    </location>
    <ligand>
        <name>ATP</name>
        <dbReference type="ChEBI" id="CHEBI:30616"/>
    </ligand>
</feature>
<feature type="binding site" evidence="1">
    <location>
        <position position="92"/>
    </location>
    <ligand>
        <name>ATP</name>
        <dbReference type="ChEBI" id="CHEBI:30616"/>
    </ligand>
</feature>
<feature type="binding site" evidence="1">
    <location>
        <position position="93"/>
    </location>
    <ligand>
        <name>ATP</name>
        <dbReference type="ChEBI" id="CHEBI:30616"/>
    </ligand>
</feature>
<feature type="binding site" evidence="1">
    <location>
        <position position="113"/>
    </location>
    <ligand>
        <name>ATP</name>
        <dbReference type="ChEBI" id="CHEBI:30616"/>
    </ligand>
</feature>
<feature type="binding site" evidence="1">
    <location>
        <position position="125"/>
    </location>
    <ligand>
        <name>ATP</name>
        <dbReference type="ChEBI" id="CHEBI:30616"/>
    </ligand>
</feature>
<feature type="binding site" evidence="1">
    <location>
        <position position="126"/>
    </location>
    <ligand>
        <name>ATP</name>
        <dbReference type="ChEBI" id="CHEBI:30616"/>
    </ligand>
</feature>
<feature type="binding site" evidence="1">
    <location>
        <position position="176"/>
    </location>
    <ligand>
        <name>ATP</name>
        <dbReference type="ChEBI" id="CHEBI:30616"/>
    </ligand>
</feature>
<feature type="binding site" evidence="1">
    <location>
        <position position="183"/>
    </location>
    <ligand>
        <name>ATP</name>
        <dbReference type="ChEBI" id="CHEBI:30616"/>
    </ligand>
</feature>
<feature type="binding site" evidence="1">
    <location>
        <position position="253"/>
    </location>
    <ligand>
        <name>Mg(2+)</name>
        <dbReference type="ChEBI" id="CHEBI:18420"/>
    </ligand>
</feature>
<feature type="binding site" evidence="1">
    <location>
        <position position="262"/>
    </location>
    <ligand>
        <name>ATP</name>
        <dbReference type="ChEBI" id="CHEBI:30616"/>
    </ligand>
</feature>
<feature type="binding site" evidence="1">
    <location>
        <position position="262"/>
    </location>
    <ligand>
        <name>Mg(2+)</name>
        <dbReference type="ChEBI" id="CHEBI:18420"/>
    </ligand>
</feature>
<proteinExistence type="inferred from homology"/>
<dbReference type="EC" id="2.7.7.-" evidence="1"/>
<dbReference type="EC" id="2.7.7.108" evidence="1"/>
<dbReference type="EMBL" id="CP000712">
    <property type="protein sequence ID" value="ABQ81061.1"/>
    <property type="molecule type" value="Genomic_DNA"/>
</dbReference>
<dbReference type="SMR" id="A5WAA1"/>
<dbReference type="KEGG" id="ppf:Pput_4941"/>
<dbReference type="eggNOG" id="COG0397">
    <property type="taxonomic scope" value="Bacteria"/>
</dbReference>
<dbReference type="HOGENOM" id="CLU_010245_4_0_6"/>
<dbReference type="GO" id="GO:0070733">
    <property type="term" value="F:AMPylase activity"/>
    <property type="evidence" value="ECO:0007669"/>
    <property type="project" value="TreeGrafter"/>
</dbReference>
<dbReference type="GO" id="GO:0005524">
    <property type="term" value="F:ATP binding"/>
    <property type="evidence" value="ECO:0007669"/>
    <property type="project" value="UniProtKB-UniRule"/>
</dbReference>
<dbReference type="GO" id="GO:0000287">
    <property type="term" value="F:magnesium ion binding"/>
    <property type="evidence" value="ECO:0007669"/>
    <property type="project" value="UniProtKB-UniRule"/>
</dbReference>
<dbReference type="HAMAP" id="MF_00692">
    <property type="entry name" value="YdiU_SelO"/>
    <property type="match status" value="1"/>
</dbReference>
<dbReference type="InterPro" id="IPR003846">
    <property type="entry name" value="SelO"/>
</dbReference>
<dbReference type="NCBIfam" id="NF000658">
    <property type="entry name" value="PRK00029.1"/>
    <property type="match status" value="1"/>
</dbReference>
<dbReference type="NCBIfam" id="NF045949">
    <property type="entry name" value="PrtAdtaseSelOPseudom"/>
    <property type="match status" value="1"/>
</dbReference>
<dbReference type="PANTHER" id="PTHR32057">
    <property type="entry name" value="PROTEIN ADENYLYLTRANSFERASE SELO, MITOCHONDRIAL"/>
    <property type="match status" value="1"/>
</dbReference>
<dbReference type="PANTHER" id="PTHR32057:SF14">
    <property type="entry name" value="PROTEIN ADENYLYLTRANSFERASE SELO, MITOCHONDRIAL"/>
    <property type="match status" value="1"/>
</dbReference>
<dbReference type="Pfam" id="PF02696">
    <property type="entry name" value="SelO"/>
    <property type="match status" value="1"/>
</dbReference>
<evidence type="ECO:0000255" key="1">
    <source>
        <dbReference type="HAMAP-Rule" id="MF_00692"/>
    </source>
</evidence>
<organism>
    <name type="scientific">Pseudomonas putida (strain ATCC 700007 / DSM 6899 / JCM 31910 / BCRC 17059 / LMG 24140 / F1)</name>
    <dbReference type="NCBI Taxonomy" id="351746"/>
    <lineage>
        <taxon>Bacteria</taxon>
        <taxon>Pseudomonadati</taxon>
        <taxon>Pseudomonadota</taxon>
        <taxon>Gammaproteobacteria</taxon>
        <taxon>Pseudomonadales</taxon>
        <taxon>Pseudomonadaceae</taxon>
        <taxon>Pseudomonas</taxon>
    </lineage>
</organism>
<protein>
    <recommendedName>
        <fullName evidence="1">Protein nucleotidyltransferase YdiU</fullName>
        <ecNumber evidence="1">2.7.7.-</ecNumber>
    </recommendedName>
    <alternativeName>
        <fullName evidence="1">Protein adenylyltransferase YdiU</fullName>
        <ecNumber evidence="1">2.7.7.108</ecNumber>
    </alternativeName>
    <alternativeName>
        <fullName evidence="1">Protein uridylyltransferase YdiU</fullName>
        <ecNumber evidence="1">2.7.7.-</ecNumber>
    </alternativeName>
</protein>